<organism>
    <name type="scientific">Schizosaccharomyces pombe (strain 972 / ATCC 24843)</name>
    <name type="common">Fission yeast</name>
    <dbReference type="NCBI Taxonomy" id="284812"/>
    <lineage>
        <taxon>Eukaryota</taxon>
        <taxon>Fungi</taxon>
        <taxon>Dikarya</taxon>
        <taxon>Ascomycota</taxon>
        <taxon>Taphrinomycotina</taxon>
        <taxon>Schizosaccharomycetes</taxon>
        <taxon>Schizosaccharomycetales</taxon>
        <taxon>Schizosaccharomycetaceae</taxon>
        <taxon>Schizosaccharomyces</taxon>
    </lineage>
</organism>
<evidence type="ECO:0000250" key="1">
    <source>
        <dbReference type="UniProtKB" id="P49167"/>
    </source>
</evidence>
<evidence type="ECO:0000269" key="2">
    <source>
    </source>
</evidence>
<evidence type="ECO:0000305" key="3"/>
<proteinExistence type="inferred from homology"/>
<protein>
    <recommendedName>
        <fullName evidence="3">Large ribosomal subunit protein eL38B</fullName>
    </recommendedName>
    <alternativeName>
        <fullName>60S ribosomal protein L38-2</fullName>
    </alternativeName>
</protein>
<accession>Q09900</accession>
<name>RL38B_SCHPO</name>
<keyword id="KW-0963">Cytoplasm</keyword>
<keyword id="KW-1185">Reference proteome</keyword>
<keyword id="KW-0687">Ribonucleoprotein</keyword>
<keyword id="KW-0689">Ribosomal protein</keyword>
<sequence length="74" mass="8339">MPRQVTDIKLFLQLAHRGDATSARVKKNQNKAVKFKLRCSRYLYTLVVADAKKAEKLRQSLPPALTVTEVGKKA</sequence>
<feature type="chain" id="PRO_0000215444" description="Large ribosomal subunit protein eL38B">
    <location>
        <begin position="1"/>
        <end position="74"/>
    </location>
</feature>
<dbReference type="EMBL" id="CU329670">
    <property type="protein sequence ID" value="CAA91898.1"/>
    <property type="molecule type" value="Genomic_DNA"/>
</dbReference>
<dbReference type="PIR" id="S62570">
    <property type="entry name" value="S62570"/>
</dbReference>
<dbReference type="RefSeq" id="NP_593205.1">
    <property type="nucleotide sequence ID" value="NM_001018601.2"/>
</dbReference>
<dbReference type="SMR" id="Q09900"/>
<dbReference type="BioGRID" id="278200">
    <property type="interactions" value="2"/>
</dbReference>
<dbReference type="FunCoup" id="Q09900">
    <property type="interactions" value="576"/>
</dbReference>
<dbReference type="IntAct" id="Q09900">
    <property type="interactions" value="1"/>
</dbReference>
<dbReference type="STRING" id="284812.Q09900"/>
<dbReference type="iPTMnet" id="Q09900"/>
<dbReference type="PaxDb" id="4896-SPAC30D11.12.1"/>
<dbReference type="EnsemblFungi" id="SPAC30D11.12.1">
    <property type="protein sequence ID" value="SPAC30D11.12.1:pep"/>
    <property type="gene ID" value="SPAC30D11.12"/>
</dbReference>
<dbReference type="GeneID" id="2541705"/>
<dbReference type="KEGG" id="spo:2541705"/>
<dbReference type="PomBase" id="SPAC30D11.12">
    <property type="gene designation" value="rpl3802"/>
</dbReference>
<dbReference type="VEuPathDB" id="FungiDB:SPAC30D11.12"/>
<dbReference type="eggNOG" id="KOG3499">
    <property type="taxonomic scope" value="Eukaryota"/>
</dbReference>
<dbReference type="HOGENOM" id="CLU_152057_1_0_1"/>
<dbReference type="InParanoid" id="Q09900"/>
<dbReference type="OMA" id="MPKQIHD"/>
<dbReference type="PhylomeDB" id="Q09900"/>
<dbReference type="PRO" id="PR:Q09900"/>
<dbReference type="Proteomes" id="UP000002485">
    <property type="component" value="Chromosome I"/>
</dbReference>
<dbReference type="GO" id="GO:0005829">
    <property type="term" value="C:cytosol"/>
    <property type="evidence" value="ECO:0007005"/>
    <property type="project" value="PomBase"/>
</dbReference>
<dbReference type="GO" id="GO:0022625">
    <property type="term" value="C:cytosolic large ribosomal subunit"/>
    <property type="evidence" value="ECO:0000318"/>
    <property type="project" value="GO_Central"/>
</dbReference>
<dbReference type="GO" id="GO:0003735">
    <property type="term" value="F:structural constituent of ribosome"/>
    <property type="evidence" value="ECO:0000318"/>
    <property type="project" value="GO_Central"/>
</dbReference>
<dbReference type="GO" id="GO:0002181">
    <property type="term" value="P:cytoplasmic translation"/>
    <property type="evidence" value="ECO:0000266"/>
    <property type="project" value="PomBase"/>
</dbReference>
<dbReference type="GO" id="GO:0022618">
    <property type="term" value="P:protein-RNA complex assembly"/>
    <property type="evidence" value="ECO:0000318"/>
    <property type="project" value="GO_Central"/>
</dbReference>
<dbReference type="FunFam" id="3.30.720.90:FF:000001">
    <property type="entry name" value="60S ribosomal protein L38"/>
    <property type="match status" value="1"/>
</dbReference>
<dbReference type="Gene3D" id="3.30.720.90">
    <property type="match status" value="1"/>
</dbReference>
<dbReference type="InterPro" id="IPR002675">
    <property type="entry name" value="Ribosomal_eL38"/>
</dbReference>
<dbReference type="InterPro" id="IPR038464">
    <property type="entry name" value="Ribosomal_eL38_sf"/>
</dbReference>
<dbReference type="PANTHER" id="PTHR10965">
    <property type="entry name" value="60S RIBOSOMAL PROTEIN L38"/>
    <property type="match status" value="1"/>
</dbReference>
<dbReference type="PANTHER" id="PTHR10965:SF0">
    <property type="entry name" value="LARGE RIBOSOMAL SUBUNIT PROTEIN EL38"/>
    <property type="match status" value="1"/>
</dbReference>
<dbReference type="Pfam" id="PF01781">
    <property type="entry name" value="Ribosomal_L38e"/>
    <property type="match status" value="1"/>
</dbReference>
<gene>
    <name type="primary">rpl3802</name>
    <name type="synonym">rpl38</name>
    <name type="synonym">rpl38b</name>
    <name type="ORF">SPAC30D11.12</name>
</gene>
<comment type="function">
    <text evidence="1">Component of the ribosome, a large ribonucleoprotein complex responsible for the synthesis of proteins in the cell. The small ribosomal subunit (SSU) binds messenger RNAs (mRNAs) and translates the encoded message by selecting cognate aminoacyl-transfer RNA (tRNA) molecules. The large subunit (LSU) contains the ribosomal catalytic site termed the peptidyl transferase center (PTC), which catalyzes the formation of peptide bonds, thereby polymerizing the amino acids delivered by tRNAs into a polypeptide chain. The nascent polypeptides leave the ribosome through a tunnel in the LSU and interact with protein factors that function in enzymatic processing, targeting, and the membrane insertion of nascent chains at the exit of the ribosomal tunnel.</text>
</comment>
<comment type="subunit">
    <text evidence="1">Component of the large ribosomal subunit (LSU). Mature yeast ribosomes consist of a small (40S) and a large (60S) subunit. The 40S small subunit contains 1 molecule of ribosomal RNA (18S rRNA) and at least 33 different proteins. The large 60S subunit contains 3 rRNA molecules (25S, 5.8S and 5S rRNA) and at least 46 different proteins.</text>
</comment>
<comment type="subcellular location">
    <subcellularLocation>
        <location evidence="2">Cytoplasm</location>
    </subcellularLocation>
</comment>
<comment type="miscellaneous">
    <text>There are 2 genes for eL38 in S.pombe.</text>
</comment>
<comment type="similarity">
    <text evidence="3">Belongs to the eukaryotic ribosomal protein eL38 family.</text>
</comment>
<reference key="1">
    <citation type="journal article" date="2002" name="Nature">
        <title>The genome sequence of Schizosaccharomyces pombe.</title>
        <authorList>
            <person name="Wood V."/>
            <person name="Gwilliam R."/>
            <person name="Rajandream M.A."/>
            <person name="Lyne M.H."/>
            <person name="Lyne R."/>
            <person name="Stewart A."/>
            <person name="Sgouros J.G."/>
            <person name="Peat N."/>
            <person name="Hayles J."/>
            <person name="Baker S.G."/>
            <person name="Basham D."/>
            <person name="Bowman S."/>
            <person name="Brooks K."/>
            <person name="Brown D."/>
            <person name="Brown S."/>
            <person name="Chillingworth T."/>
            <person name="Churcher C.M."/>
            <person name="Collins M."/>
            <person name="Connor R."/>
            <person name="Cronin A."/>
            <person name="Davis P."/>
            <person name="Feltwell T."/>
            <person name="Fraser A."/>
            <person name="Gentles S."/>
            <person name="Goble A."/>
            <person name="Hamlin N."/>
            <person name="Harris D.E."/>
            <person name="Hidalgo J."/>
            <person name="Hodgson G."/>
            <person name="Holroyd S."/>
            <person name="Hornsby T."/>
            <person name="Howarth S."/>
            <person name="Huckle E.J."/>
            <person name="Hunt S."/>
            <person name="Jagels K."/>
            <person name="James K.D."/>
            <person name="Jones L."/>
            <person name="Jones M."/>
            <person name="Leather S."/>
            <person name="McDonald S."/>
            <person name="McLean J."/>
            <person name="Mooney P."/>
            <person name="Moule S."/>
            <person name="Mungall K.L."/>
            <person name="Murphy L.D."/>
            <person name="Niblett D."/>
            <person name="Odell C."/>
            <person name="Oliver K."/>
            <person name="O'Neil S."/>
            <person name="Pearson D."/>
            <person name="Quail M.A."/>
            <person name="Rabbinowitsch E."/>
            <person name="Rutherford K.M."/>
            <person name="Rutter S."/>
            <person name="Saunders D."/>
            <person name="Seeger K."/>
            <person name="Sharp S."/>
            <person name="Skelton J."/>
            <person name="Simmonds M.N."/>
            <person name="Squares R."/>
            <person name="Squares S."/>
            <person name="Stevens K."/>
            <person name="Taylor K."/>
            <person name="Taylor R.G."/>
            <person name="Tivey A."/>
            <person name="Walsh S.V."/>
            <person name="Warren T."/>
            <person name="Whitehead S."/>
            <person name="Woodward J.R."/>
            <person name="Volckaert G."/>
            <person name="Aert R."/>
            <person name="Robben J."/>
            <person name="Grymonprez B."/>
            <person name="Weltjens I."/>
            <person name="Vanstreels E."/>
            <person name="Rieger M."/>
            <person name="Schaefer M."/>
            <person name="Mueller-Auer S."/>
            <person name="Gabel C."/>
            <person name="Fuchs M."/>
            <person name="Duesterhoeft A."/>
            <person name="Fritzc C."/>
            <person name="Holzer E."/>
            <person name="Moestl D."/>
            <person name="Hilbert H."/>
            <person name="Borzym K."/>
            <person name="Langer I."/>
            <person name="Beck A."/>
            <person name="Lehrach H."/>
            <person name="Reinhardt R."/>
            <person name="Pohl T.M."/>
            <person name="Eger P."/>
            <person name="Zimmermann W."/>
            <person name="Wedler H."/>
            <person name="Wambutt R."/>
            <person name="Purnelle B."/>
            <person name="Goffeau A."/>
            <person name="Cadieu E."/>
            <person name="Dreano S."/>
            <person name="Gloux S."/>
            <person name="Lelaure V."/>
            <person name="Mottier S."/>
            <person name="Galibert F."/>
            <person name="Aves S.J."/>
            <person name="Xiang Z."/>
            <person name="Hunt C."/>
            <person name="Moore K."/>
            <person name="Hurst S.M."/>
            <person name="Lucas M."/>
            <person name="Rochet M."/>
            <person name="Gaillardin C."/>
            <person name="Tallada V.A."/>
            <person name="Garzon A."/>
            <person name="Thode G."/>
            <person name="Daga R.R."/>
            <person name="Cruzado L."/>
            <person name="Jimenez J."/>
            <person name="Sanchez M."/>
            <person name="del Rey F."/>
            <person name="Benito J."/>
            <person name="Dominguez A."/>
            <person name="Revuelta J.L."/>
            <person name="Moreno S."/>
            <person name="Armstrong J."/>
            <person name="Forsburg S.L."/>
            <person name="Cerutti L."/>
            <person name="Lowe T."/>
            <person name="McCombie W.R."/>
            <person name="Paulsen I."/>
            <person name="Potashkin J."/>
            <person name="Shpakovski G.V."/>
            <person name="Ussery D."/>
            <person name="Barrell B.G."/>
            <person name="Nurse P."/>
        </authorList>
    </citation>
    <scope>NUCLEOTIDE SEQUENCE [LARGE SCALE GENOMIC DNA]</scope>
    <source>
        <strain>972 / ATCC 24843</strain>
    </source>
</reference>
<reference key="2">
    <citation type="journal article" date="2006" name="Nat. Biotechnol.">
        <title>ORFeome cloning and global analysis of protein localization in the fission yeast Schizosaccharomyces pombe.</title>
        <authorList>
            <person name="Matsuyama A."/>
            <person name="Arai R."/>
            <person name="Yashiroda Y."/>
            <person name="Shirai A."/>
            <person name="Kamata A."/>
            <person name="Sekido S."/>
            <person name="Kobayashi Y."/>
            <person name="Hashimoto A."/>
            <person name="Hamamoto M."/>
            <person name="Hiraoka Y."/>
            <person name="Horinouchi S."/>
            <person name="Yoshida M."/>
        </authorList>
    </citation>
    <scope>SUBCELLULAR LOCATION [LARGE SCALE ANALYSIS]</scope>
</reference>